<evidence type="ECO:0000255" key="1"/>
<evidence type="ECO:0000255" key="2">
    <source>
        <dbReference type="PROSITE-ProRule" id="PRU00196"/>
    </source>
</evidence>
<evidence type="ECO:0000269" key="3">
    <source>
    </source>
</evidence>
<evidence type="ECO:0000303" key="4">
    <source>
    </source>
</evidence>
<evidence type="ECO:0000303" key="5">
    <source>
    </source>
</evidence>
<evidence type="ECO:0000305" key="6"/>
<evidence type="ECO:0000305" key="7">
    <source>
    </source>
</evidence>
<evidence type="ECO:0000312" key="8">
    <source>
        <dbReference type="HGNC" id="HGNC:32411"/>
    </source>
</evidence>
<comment type="function">
    <text evidence="7">May play a role in the immune system, perhaps as a co-receptor on alphabeta and gammadelta T-cells.</text>
</comment>
<comment type="subcellular location">
    <subcellularLocation>
        <location evidence="1">Membrane</location>
        <topology evidence="1">Single-pass membrane protein</topology>
    </subcellularLocation>
</comment>
<comment type="alternative products">
    <event type="alternative splicing"/>
    <isoform>
        <id>Q4G0T1-1</id>
        <name>1</name>
        <sequence type="displayed"/>
    </isoform>
    <isoform>
        <id>Q4G0T1-2</id>
        <name>Gamma</name>
        <sequence type="described" ref="VSP_039839 VSP_039840"/>
    </isoform>
    <isoform>
        <id>Q4G0T1-3</id>
        <name>Alpha</name>
        <sequence type="described" ref="VSP_053841 VSP_053842"/>
    </isoform>
</comment>
<comment type="tissue specificity">
    <text evidence="3">Mainly expressed by CD4(+) and CD8(+) T lymphocytes. Also highly expressed in small intestine and colon. Expressed (at protein level) in small intestine, stomach, gall bladder, and placental villi.</text>
</comment>
<gene>
    <name evidence="8" type="primary">SCART1</name>
</gene>
<accession>Q4G0T1</accession>
<accession>C9K0L3</accession>
<proteinExistence type="evidence at protein level"/>
<reference key="1">
    <citation type="journal article" date="2013" name="Immunobiology">
        <title>Characterization of a novel human scavenger receptor cysteine-rich molecule SCART1 expressed by lymphocytes.</title>
        <authorList>
            <person name="Holm D."/>
            <person name="Fink D.R."/>
            <person name="Steffensen M.A."/>
            <person name="Schlosser A."/>
            <person name="Nielsen O."/>
            <person name="Moeller J.B."/>
            <person name="Holmskov U."/>
        </authorList>
    </citation>
    <scope>NUCLEOTIDE SEQUENCE [MRNA] (ISOFORM ALPHA)</scope>
    <scope>FUNCTION</scope>
    <scope>TISSUE SPECIFICITY</scope>
    <scope>ALTERNATIVE SPLICING</scope>
    <source>
        <tissue>Lymphocyte</tissue>
    </source>
</reference>
<reference key="2">
    <citation type="journal article" date="2004" name="Nature">
        <title>The DNA sequence and comparative analysis of human chromosome 10.</title>
        <authorList>
            <person name="Deloukas P."/>
            <person name="Earthrowl M.E."/>
            <person name="Grafham D.V."/>
            <person name="Rubenfield M."/>
            <person name="French L."/>
            <person name="Steward C.A."/>
            <person name="Sims S.K."/>
            <person name="Jones M.C."/>
            <person name="Searle S."/>
            <person name="Scott C."/>
            <person name="Howe K."/>
            <person name="Hunt S.E."/>
            <person name="Andrews T.D."/>
            <person name="Gilbert J.G.R."/>
            <person name="Swarbreck D."/>
            <person name="Ashurst J.L."/>
            <person name="Taylor A."/>
            <person name="Battles J."/>
            <person name="Bird C.P."/>
            <person name="Ainscough R."/>
            <person name="Almeida J.P."/>
            <person name="Ashwell R.I.S."/>
            <person name="Ambrose K.D."/>
            <person name="Babbage A.K."/>
            <person name="Bagguley C.L."/>
            <person name="Bailey J."/>
            <person name="Banerjee R."/>
            <person name="Bates K."/>
            <person name="Beasley H."/>
            <person name="Bray-Allen S."/>
            <person name="Brown A.J."/>
            <person name="Brown J.Y."/>
            <person name="Burford D.C."/>
            <person name="Burrill W."/>
            <person name="Burton J."/>
            <person name="Cahill P."/>
            <person name="Camire D."/>
            <person name="Carter N.P."/>
            <person name="Chapman J.C."/>
            <person name="Clark S.Y."/>
            <person name="Clarke G."/>
            <person name="Clee C.M."/>
            <person name="Clegg S."/>
            <person name="Corby N."/>
            <person name="Coulson A."/>
            <person name="Dhami P."/>
            <person name="Dutta I."/>
            <person name="Dunn M."/>
            <person name="Faulkner L."/>
            <person name="Frankish A."/>
            <person name="Frankland J.A."/>
            <person name="Garner P."/>
            <person name="Garnett J."/>
            <person name="Gribble S."/>
            <person name="Griffiths C."/>
            <person name="Grocock R."/>
            <person name="Gustafson E."/>
            <person name="Hammond S."/>
            <person name="Harley J.L."/>
            <person name="Hart E."/>
            <person name="Heath P.D."/>
            <person name="Ho T.P."/>
            <person name="Hopkins B."/>
            <person name="Horne J."/>
            <person name="Howden P.J."/>
            <person name="Huckle E."/>
            <person name="Hynds C."/>
            <person name="Johnson C."/>
            <person name="Johnson D."/>
            <person name="Kana A."/>
            <person name="Kay M."/>
            <person name="Kimberley A.M."/>
            <person name="Kershaw J.K."/>
            <person name="Kokkinaki M."/>
            <person name="Laird G.K."/>
            <person name="Lawlor S."/>
            <person name="Lee H.M."/>
            <person name="Leongamornlert D.A."/>
            <person name="Laird G."/>
            <person name="Lloyd C."/>
            <person name="Lloyd D.M."/>
            <person name="Loveland J."/>
            <person name="Lovell J."/>
            <person name="McLaren S."/>
            <person name="McLay K.E."/>
            <person name="McMurray A."/>
            <person name="Mashreghi-Mohammadi M."/>
            <person name="Matthews L."/>
            <person name="Milne S."/>
            <person name="Nickerson T."/>
            <person name="Nguyen M."/>
            <person name="Overton-Larty E."/>
            <person name="Palmer S.A."/>
            <person name="Pearce A.V."/>
            <person name="Peck A.I."/>
            <person name="Pelan S."/>
            <person name="Phillimore B."/>
            <person name="Porter K."/>
            <person name="Rice C.M."/>
            <person name="Rogosin A."/>
            <person name="Ross M.T."/>
            <person name="Sarafidou T."/>
            <person name="Sehra H.K."/>
            <person name="Shownkeen R."/>
            <person name="Skuce C.D."/>
            <person name="Smith M."/>
            <person name="Standring L."/>
            <person name="Sycamore N."/>
            <person name="Tester J."/>
            <person name="Thorpe A."/>
            <person name="Torcasso W."/>
            <person name="Tracey A."/>
            <person name="Tromans A."/>
            <person name="Tsolas J."/>
            <person name="Wall M."/>
            <person name="Walsh J."/>
            <person name="Wang H."/>
            <person name="Weinstock K."/>
            <person name="West A.P."/>
            <person name="Willey D.L."/>
            <person name="Whitehead S.L."/>
            <person name="Wilming L."/>
            <person name="Wray P.W."/>
            <person name="Young L."/>
            <person name="Chen Y."/>
            <person name="Lovering R.C."/>
            <person name="Moschonas N.K."/>
            <person name="Siebert R."/>
            <person name="Fechtel K."/>
            <person name="Bentley D."/>
            <person name="Durbin R.M."/>
            <person name="Hubbard T."/>
            <person name="Doucette-Stamm L."/>
            <person name="Beck S."/>
            <person name="Smith D.R."/>
            <person name="Rogers J."/>
        </authorList>
    </citation>
    <scope>NUCLEOTIDE SEQUENCE [LARGE SCALE GENOMIC DNA]</scope>
</reference>
<reference key="3">
    <citation type="journal article" date="2004" name="Genome Res.">
        <title>The status, quality, and expansion of the NIH full-length cDNA project: the Mammalian Gene Collection (MGC).</title>
        <authorList>
            <consortium name="The MGC Project Team"/>
        </authorList>
    </citation>
    <scope>NUCLEOTIDE SEQUENCE [LARGE SCALE MRNA] (ISOFORM GAMMA)</scope>
    <source>
        <tissue>Brain</tissue>
    </source>
</reference>
<sequence length="1027" mass="108611">MRAALWTLGLGPLLLNLWAVPIGGPGALRLAYRHSTCDGVVLVRHHGAWGYVCNQEWTLAEASVVCRQLGCGPAVGAPKYVPLPGEMAQPWLHNVSCRGNESSLWECSLGSWCQSPCPHAWVVVALCSNGTFRELRLVKGRSPCAGLPEIRNVNGVDRLCVLHVEEAMVFCRELGCGPVLQAPRRDVGVVRKYLACRGTEPTIRSCRLDNNFRSGCDLRLDAEVVCSGHTEARLVGGEHPCAGRLEVTWGTVCDAALDLATAHVVCRELQCGAVVSTPEGARFGRGSGPVWTEAFRCAGNESLLFHCPRGRGSQCGHGHDAGLRCSEFRMVNGSSSCEGRVEFQVQGSWAPLCATHWDIADATVLCHQLNCGNAVAAPGGGHFGDGDAAIWPDAFHCEGTESYLWNCPVSTLGAPACAPGNTASAVCSGLAHALRLREGQSRCDGRVEVSLDGVWGRVLDDAWDLRGAGVVCRQLGCRGAQQAYDAPAPSRGSVQVALSRVRCLGTETRLTQCNVSATLQEPAGTSRDAGVVCSGEVGTASPMARRHGIPGALTLSLHREPQGAAGRGAGALHGGAWGTVCDDAWDLRDAHVVCRQLGCGRALSALGAAHFGAGAGRIWLDELGCQGHESALWQCPSAGWGRHDWRHKEDAGVFCSESVALRLRGGTCCCAGWLDVFYNGTWGAMCSNALKDLSLSIICKQLGCGVWGVGLAGEQALPLCGHRDRLGGQHRVPQAAQLHSVAMPFPPMAPALLRPSRAGLSEDRPQAAGEPLNCSSWLGCPEEGALRVRGGEDRCSGRVELWHAGSWGTVCDDGWDLADAEVVCRQLGCGRAVAALGAAAFGPGSGPVWLDEVGCRGSEASLWGCPAERWGRGDRAHEEDAGVRCWEPGPGPPLPAAPFRTFWVVSVVLGSLLGLLLLGLMAFLILPRVTQAMQRGLGRSEVSPGEAIYDVIGEMPPAGLYEEIMEAEAVLQDEEDGSVVKVDTEAAVSGEVSNLLEGQSIRAEGGHSRPVSQGYDEAAFPLEEMTL</sequence>
<keyword id="KW-0025">Alternative splicing</keyword>
<keyword id="KW-1015">Disulfide bond</keyword>
<keyword id="KW-0325">Glycoprotein</keyword>
<keyword id="KW-0391">Immunity</keyword>
<keyword id="KW-0472">Membrane</keyword>
<keyword id="KW-1267">Proteomics identification</keyword>
<keyword id="KW-1185">Reference proteome</keyword>
<keyword id="KW-0677">Repeat</keyword>
<keyword id="KW-0732">Signal</keyword>
<keyword id="KW-0812">Transmembrane</keyword>
<keyword id="KW-1133">Transmembrane helix</keyword>
<feature type="signal peptide" evidence="1">
    <location>
        <begin position="1"/>
        <end position="19"/>
    </location>
</feature>
<feature type="chain" id="PRO_0000399392" description="Scavenger receptor cysteine-rich domain-containing protein SCART1">
    <location>
        <begin position="20"/>
        <end position="1027"/>
    </location>
</feature>
<feature type="topological domain" description="Extracellular" evidence="1">
    <location>
        <begin position="20"/>
        <end position="906"/>
    </location>
</feature>
<feature type="transmembrane region" description="Helical" evidence="1">
    <location>
        <begin position="907"/>
        <end position="927"/>
    </location>
</feature>
<feature type="topological domain" description="Cytoplasmic" evidence="1">
    <location>
        <begin position="928"/>
        <end position="1027"/>
    </location>
</feature>
<feature type="domain" description="SRCR 1" evidence="2">
    <location>
        <begin position="28"/>
        <end position="128"/>
    </location>
</feature>
<feature type="domain" description="SRCR 2" evidence="2">
    <location>
        <begin position="135"/>
        <end position="227"/>
    </location>
</feature>
<feature type="domain" description="SRCR 3" evidence="2">
    <location>
        <begin position="232"/>
        <end position="326"/>
    </location>
</feature>
<feature type="domain" description="SRCR 4" evidence="2">
    <location>
        <begin position="328"/>
        <end position="428"/>
    </location>
</feature>
<feature type="domain" description="SRCR 5" evidence="2">
    <location>
        <begin position="434"/>
        <end position="534"/>
    </location>
</feature>
<feature type="domain" description="SRCR 6" evidence="2">
    <location>
        <begin position="555"/>
        <end position="656"/>
    </location>
</feature>
<feature type="domain" description="SRCR 7" evidence="2">
    <location>
        <begin position="661"/>
        <end position="761"/>
    </location>
</feature>
<feature type="domain" description="SRCR 8" evidence="2">
    <location>
        <begin position="786"/>
        <end position="886"/>
    </location>
</feature>
<feature type="glycosylation site" description="N-linked (GlcNAc...) asparagine" evidence="1">
    <location>
        <position position="94"/>
    </location>
</feature>
<feature type="glycosylation site" description="N-linked (GlcNAc...) asparagine" evidence="1">
    <location>
        <position position="129"/>
    </location>
</feature>
<feature type="glycosylation site" description="N-linked (GlcNAc...) asparagine" evidence="1">
    <location>
        <position position="332"/>
    </location>
</feature>
<feature type="disulfide bond" evidence="2">
    <location>
        <begin position="53"/>
        <end position="117"/>
    </location>
</feature>
<feature type="disulfide bond" evidence="2">
    <location>
        <begin position="66"/>
        <end position="127"/>
    </location>
</feature>
<feature type="disulfide bond" evidence="2">
    <location>
        <begin position="97"/>
        <end position="107"/>
    </location>
</feature>
<feature type="disulfide bond" evidence="2">
    <location>
        <begin position="160"/>
        <end position="216"/>
    </location>
</feature>
<feature type="disulfide bond" evidence="2">
    <location>
        <begin position="171"/>
        <end position="226"/>
    </location>
</feature>
<feature type="disulfide bond" evidence="2">
    <location>
        <begin position="196"/>
        <end position="206"/>
    </location>
</feature>
<feature type="disulfide bond" evidence="2">
    <location>
        <begin position="253"/>
        <end position="315"/>
    </location>
</feature>
<feature type="disulfide bond" evidence="2">
    <location>
        <begin position="266"/>
        <end position="325"/>
    </location>
</feature>
<feature type="disulfide bond" evidence="2">
    <location>
        <begin position="297"/>
        <end position="307"/>
    </location>
</feature>
<feature type="disulfide bond" evidence="2">
    <location>
        <begin position="353"/>
        <end position="417"/>
    </location>
</feature>
<feature type="disulfide bond" evidence="2">
    <location>
        <begin position="366"/>
        <end position="427"/>
    </location>
</feature>
<feature type="disulfide bond" evidence="2">
    <location>
        <begin position="397"/>
        <end position="407"/>
    </location>
</feature>
<feature type="disulfide bond" evidence="2">
    <location>
        <begin position="472"/>
        <end position="533"/>
    </location>
</feature>
<feature type="disulfide bond" evidence="2">
    <location>
        <begin position="503"/>
        <end position="513"/>
    </location>
</feature>
<feature type="disulfide bond" evidence="2">
    <location>
        <begin position="594"/>
        <end position="655"/>
    </location>
</feature>
<feature type="disulfide bond" evidence="2">
    <location>
        <begin position="625"/>
        <end position="635"/>
    </location>
</feature>
<feature type="disulfide bond" evidence="2">
    <location>
        <begin position="824"/>
        <end position="885"/>
    </location>
</feature>
<feature type="disulfide bond" evidence="2">
    <location>
        <begin position="855"/>
        <end position="865"/>
    </location>
</feature>
<feature type="splice variant" id="VSP_053841" description="In isoform Alpha." evidence="5">
    <location>
        <begin position="226"/>
        <end position="324"/>
    </location>
</feature>
<feature type="splice variant" id="VSP_039839" description="In isoform Gamma." evidence="4">
    <original>HTEA</original>
    <variation>EAAT</variation>
    <location>
        <begin position="229"/>
        <end position="232"/>
    </location>
</feature>
<feature type="splice variant" id="VSP_039840" description="In isoform Gamma." evidence="4">
    <location>
        <begin position="233"/>
        <end position="1027"/>
    </location>
</feature>
<feature type="splice variant" id="VSP_053842" description="In isoform Alpha." evidence="5">
    <location>
        <begin position="657"/>
        <end position="935"/>
    </location>
</feature>
<feature type="sequence conflict" description="In Ref. 3; BC038300." evidence="6" ref="3">
    <original>Q</original>
    <variation>K</variation>
    <location>
        <position position="89"/>
    </location>
</feature>
<feature type="sequence conflict" description="In Ref. 3; BC038300." evidence="6" ref="3">
    <original>R</original>
    <variation>G</variation>
    <location>
        <position position="136"/>
    </location>
</feature>
<protein>
    <recommendedName>
        <fullName evidence="6">Scavenger receptor cysteine-rich domain-containing protein SCART1</fullName>
    </recommendedName>
    <alternativeName>
        <fullName evidence="8">Scavenger receptor family member expressed on T cells 1</fullName>
    </alternativeName>
</protein>
<dbReference type="EMBL" id="AL161645">
    <property type="status" value="NOT_ANNOTATED_CDS"/>
    <property type="molecule type" value="Genomic_DNA"/>
</dbReference>
<dbReference type="EMBL" id="BC038300">
    <property type="status" value="NOT_ANNOTATED_CDS"/>
    <property type="molecule type" value="mRNA"/>
</dbReference>
<dbReference type="CCDS" id="CCDS91391.1">
    <molecule id="Q4G0T1-1"/>
</dbReference>
<dbReference type="RefSeq" id="NP_001382979.1">
    <molecule id="Q4G0T1-1"/>
    <property type="nucleotide sequence ID" value="NM_001396050.1"/>
</dbReference>
<dbReference type="SMR" id="Q4G0T1"/>
<dbReference type="STRING" id="9606.ENSP00000491516"/>
<dbReference type="GlyCosmos" id="Q4G0T1">
    <property type="glycosylation" value="3 sites, No reported glycans"/>
</dbReference>
<dbReference type="GlyGen" id="Q4G0T1">
    <property type="glycosylation" value="5 sites, 1 O-linked glycan (1 site)"/>
</dbReference>
<dbReference type="iPTMnet" id="Q4G0T1"/>
<dbReference type="BioMuta" id="-"/>
<dbReference type="DMDM" id="308153504"/>
<dbReference type="jPOST" id="Q4G0T1"/>
<dbReference type="MassIVE" id="Q4G0T1"/>
<dbReference type="PeptideAtlas" id="Q4G0T1"/>
<dbReference type="Antibodypedia" id="48904">
    <property type="antibodies" value="3 antibodies from 2 providers"/>
</dbReference>
<dbReference type="Ensembl" id="ENST00000640237.2">
    <molecule id="Q4G0T1-1"/>
    <property type="protein sequence ID" value="ENSP00000491516.1"/>
    <property type="gene ID" value="ENSG00000214279.13"/>
</dbReference>
<dbReference type="GeneID" id="619207"/>
<dbReference type="MANE-Select" id="ENST00000640237.2">
    <property type="protein sequence ID" value="ENSP00000491516.1"/>
    <property type="RefSeq nucleotide sequence ID" value="NM_001396050.1"/>
    <property type="RefSeq protein sequence ID" value="NP_001382979.1"/>
</dbReference>
<dbReference type="AGR" id="HGNC:32411"/>
<dbReference type="GeneCards" id="SCART1"/>
<dbReference type="HGNC" id="HGNC:32411">
    <property type="gene designation" value="SCART1"/>
</dbReference>
<dbReference type="HPA" id="ENSG00000214279">
    <property type="expression patterns" value="Low tissue specificity"/>
</dbReference>
<dbReference type="neXtProt" id="NX_Q4G0T1"/>
<dbReference type="OpenTargets" id="ENSG00000214279"/>
<dbReference type="VEuPathDB" id="HostDB:ENSG00000214279"/>
<dbReference type="GeneTree" id="ENSGT00940000162139"/>
<dbReference type="InParanoid" id="Q4G0T1"/>
<dbReference type="OMA" id="CCCAGWL"/>
<dbReference type="OrthoDB" id="536948at2759"/>
<dbReference type="PAN-GO" id="Q4G0T1">
    <property type="GO annotations" value="1 GO annotation based on evolutionary models"/>
</dbReference>
<dbReference type="PhylomeDB" id="Q4G0T1"/>
<dbReference type="CD-CODE" id="232F8A39">
    <property type="entry name" value="P-body"/>
</dbReference>
<dbReference type="Pharos" id="Q4G0T1">
    <property type="development level" value="Tdark"/>
</dbReference>
<dbReference type="PRO" id="PR:Q4G0T1"/>
<dbReference type="Proteomes" id="UP000005640">
    <property type="component" value="Chromosome 10"/>
</dbReference>
<dbReference type="RNAct" id="Q4G0T1">
    <property type="molecule type" value="protein"/>
</dbReference>
<dbReference type="GO" id="GO:0005903">
    <property type="term" value="C:brush border"/>
    <property type="evidence" value="ECO:0000314"/>
    <property type="project" value="UniProtKB"/>
</dbReference>
<dbReference type="GO" id="GO:0005737">
    <property type="term" value="C:cytoplasm"/>
    <property type="evidence" value="ECO:0000314"/>
    <property type="project" value="UniProtKB"/>
</dbReference>
<dbReference type="GO" id="GO:0005886">
    <property type="term" value="C:plasma membrane"/>
    <property type="evidence" value="ECO:0007669"/>
    <property type="project" value="Ensembl"/>
</dbReference>
<dbReference type="GO" id="GO:0002456">
    <property type="term" value="P:T cell mediated immunity"/>
    <property type="evidence" value="ECO:0000303"/>
    <property type="project" value="UniProtKB"/>
</dbReference>
<dbReference type="FunFam" id="3.10.250.10:FF:000074">
    <property type="match status" value="1"/>
</dbReference>
<dbReference type="FunFam" id="3.10.250.10:FF:000016">
    <property type="entry name" value="Scavenger receptor cysteine-rich protein type 12"/>
    <property type="match status" value="1"/>
</dbReference>
<dbReference type="FunFam" id="3.10.250.10:FF:000002">
    <property type="entry name" value="Scavenger receptor cysteine-rich type 1 protein M130"/>
    <property type="match status" value="3"/>
</dbReference>
<dbReference type="FunFam" id="3.10.250.10:FF:000004">
    <property type="entry name" value="Scavenger receptor cysteine-rich type 1 protein M130"/>
    <property type="match status" value="1"/>
</dbReference>
<dbReference type="FunFam" id="3.10.250.10:FF:000033">
    <property type="entry name" value="Scavenger receptor family member expressed on T cells 1"/>
    <property type="match status" value="1"/>
</dbReference>
<dbReference type="FunFam" id="3.10.250.10:FF:000038">
    <property type="entry name" value="Scavenger receptor family member expressed on T cells 1"/>
    <property type="match status" value="1"/>
</dbReference>
<dbReference type="Gene3D" id="3.10.250.10">
    <property type="entry name" value="SRCR-like domain"/>
    <property type="match status" value="8"/>
</dbReference>
<dbReference type="InterPro" id="IPR001190">
    <property type="entry name" value="SRCR"/>
</dbReference>
<dbReference type="InterPro" id="IPR036772">
    <property type="entry name" value="SRCR-like_dom_sf"/>
</dbReference>
<dbReference type="PANTHER" id="PTHR19331:SF458">
    <property type="entry name" value="SCAVENGER RECEPTOR CYSTEINE-RICH DOMAIN-CONTAINING PROTEIN SCART1"/>
    <property type="match status" value="1"/>
</dbReference>
<dbReference type="PANTHER" id="PTHR19331">
    <property type="entry name" value="SCAVENGER RECEPTOR DOMAIN-CONTAINING"/>
    <property type="match status" value="1"/>
</dbReference>
<dbReference type="Pfam" id="PF00530">
    <property type="entry name" value="SRCR"/>
    <property type="match status" value="8"/>
</dbReference>
<dbReference type="PRINTS" id="PR00258">
    <property type="entry name" value="SPERACTRCPTR"/>
</dbReference>
<dbReference type="SMART" id="SM00202">
    <property type="entry name" value="SR"/>
    <property type="match status" value="7"/>
</dbReference>
<dbReference type="SUPFAM" id="SSF56487">
    <property type="entry name" value="SRCR-like"/>
    <property type="match status" value="8"/>
</dbReference>
<dbReference type="PROSITE" id="PS00420">
    <property type="entry name" value="SRCR_1"/>
    <property type="match status" value="1"/>
</dbReference>
<dbReference type="PROSITE" id="PS50287">
    <property type="entry name" value="SRCR_2"/>
    <property type="match status" value="8"/>
</dbReference>
<organism>
    <name type="scientific">Homo sapiens</name>
    <name type="common">Human</name>
    <dbReference type="NCBI Taxonomy" id="9606"/>
    <lineage>
        <taxon>Eukaryota</taxon>
        <taxon>Metazoa</taxon>
        <taxon>Chordata</taxon>
        <taxon>Craniata</taxon>
        <taxon>Vertebrata</taxon>
        <taxon>Euteleostomi</taxon>
        <taxon>Mammalia</taxon>
        <taxon>Eutheria</taxon>
        <taxon>Euarchontoglires</taxon>
        <taxon>Primates</taxon>
        <taxon>Haplorrhini</taxon>
        <taxon>Catarrhini</taxon>
        <taxon>Hominidae</taxon>
        <taxon>Homo</taxon>
    </lineage>
</organism>
<name>SRCRM_HUMAN</name>